<dbReference type="EC" id="1.5.1.5" evidence="1"/>
<dbReference type="EC" id="3.5.4.9" evidence="1"/>
<dbReference type="EMBL" id="CP000468">
    <property type="protein sequence ID" value="ABI99983.1"/>
    <property type="molecule type" value="Genomic_DNA"/>
</dbReference>
<dbReference type="RefSeq" id="WP_000729155.1">
    <property type="nucleotide sequence ID" value="NZ_CADILS010000009.1"/>
</dbReference>
<dbReference type="SMR" id="A1A8J4"/>
<dbReference type="GeneID" id="93776949"/>
<dbReference type="KEGG" id="ecv:APECO1_1486"/>
<dbReference type="HOGENOM" id="CLU_034045_2_1_6"/>
<dbReference type="UniPathway" id="UPA00193"/>
<dbReference type="Proteomes" id="UP000008216">
    <property type="component" value="Chromosome"/>
</dbReference>
<dbReference type="GO" id="GO:0005829">
    <property type="term" value="C:cytosol"/>
    <property type="evidence" value="ECO:0007669"/>
    <property type="project" value="TreeGrafter"/>
</dbReference>
<dbReference type="GO" id="GO:0004477">
    <property type="term" value="F:methenyltetrahydrofolate cyclohydrolase activity"/>
    <property type="evidence" value="ECO:0007669"/>
    <property type="project" value="UniProtKB-UniRule"/>
</dbReference>
<dbReference type="GO" id="GO:0004488">
    <property type="term" value="F:methylenetetrahydrofolate dehydrogenase (NADP+) activity"/>
    <property type="evidence" value="ECO:0007669"/>
    <property type="project" value="UniProtKB-UniRule"/>
</dbReference>
<dbReference type="GO" id="GO:0000105">
    <property type="term" value="P:L-histidine biosynthetic process"/>
    <property type="evidence" value="ECO:0007669"/>
    <property type="project" value="UniProtKB-KW"/>
</dbReference>
<dbReference type="GO" id="GO:0009086">
    <property type="term" value="P:methionine biosynthetic process"/>
    <property type="evidence" value="ECO:0007669"/>
    <property type="project" value="UniProtKB-KW"/>
</dbReference>
<dbReference type="GO" id="GO:0006164">
    <property type="term" value="P:purine nucleotide biosynthetic process"/>
    <property type="evidence" value="ECO:0007669"/>
    <property type="project" value="UniProtKB-KW"/>
</dbReference>
<dbReference type="GO" id="GO:0035999">
    <property type="term" value="P:tetrahydrofolate interconversion"/>
    <property type="evidence" value="ECO:0007669"/>
    <property type="project" value="UniProtKB-UniRule"/>
</dbReference>
<dbReference type="CDD" id="cd01080">
    <property type="entry name" value="NAD_bind_m-THF_DH_Cyclohyd"/>
    <property type="match status" value="1"/>
</dbReference>
<dbReference type="FunFam" id="3.40.50.10860:FF:000001">
    <property type="entry name" value="Bifunctional protein FolD"/>
    <property type="match status" value="1"/>
</dbReference>
<dbReference type="FunFam" id="3.40.50.720:FF:000006">
    <property type="entry name" value="Bifunctional protein FolD"/>
    <property type="match status" value="1"/>
</dbReference>
<dbReference type="Gene3D" id="3.40.50.10860">
    <property type="entry name" value="Leucine Dehydrogenase, chain A, domain 1"/>
    <property type="match status" value="1"/>
</dbReference>
<dbReference type="Gene3D" id="3.40.50.720">
    <property type="entry name" value="NAD(P)-binding Rossmann-like Domain"/>
    <property type="match status" value="1"/>
</dbReference>
<dbReference type="HAMAP" id="MF_01576">
    <property type="entry name" value="THF_DHG_CYH"/>
    <property type="match status" value="1"/>
</dbReference>
<dbReference type="InterPro" id="IPR046346">
    <property type="entry name" value="Aminoacid_DH-like_N_sf"/>
</dbReference>
<dbReference type="InterPro" id="IPR036291">
    <property type="entry name" value="NAD(P)-bd_dom_sf"/>
</dbReference>
<dbReference type="InterPro" id="IPR000672">
    <property type="entry name" value="THF_DH/CycHdrlase"/>
</dbReference>
<dbReference type="InterPro" id="IPR020630">
    <property type="entry name" value="THF_DH/CycHdrlase_cat_dom"/>
</dbReference>
<dbReference type="InterPro" id="IPR020867">
    <property type="entry name" value="THF_DH/CycHdrlase_CS"/>
</dbReference>
<dbReference type="InterPro" id="IPR020631">
    <property type="entry name" value="THF_DH/CycHdrlase_NAD-bd_dom"/>
</dbReference>
<dbReference type="NCBIfam" id="NF008058">
    <property type="entry name" value="PRK10792.1"/>
    <property type="match status" value="1"/>
</dbReference>
<dbReference type="NCBIfam" id="NF010783">
    <property type="entry name" value="PRK14186.1"/>
    <property type="match status" value="1"/>
</dbReference>
<dbReference type="PANTHER" id="PTHR48099:SF5">
    <property type="entry name" value="C-1-TETRAHYDROFOLATE SYNTHASE, CYTOPLASMIC"/>
    <property type="match status" value="1"/>
</dbReference>
<dbReference type="PANTHER" id="PTHR48099">
    <property type="entry name" value="C-1-TETRAHYDROFOLATE SYNTHASE, CYTOPLASMIC-RELATED"/>
    <property type="match status" value="1"/>
</dbReference>
<dbReference type="Pfam" id="PF00763">
    <property type="entry name" value="THF_DHG_CYH"/>
    <property type="match status" value="1"/>
</dbReference>
<dbReference type="Pfam" id="PF02882">
    <property type="entry name" value="THF_DHG_CYH_C"/>
    <property type="match status" value="1"/>
</dbReference>
<dbReference type="PRINTS" id="PR00085">
    <property type="entry name" value="THFDHDRGNASE"/>
</dbReference>
<dbReference type="SUPFAM" id="SSF53223">
    <property type="entry name" value="Aminoacid dehydrogenase-like, N-terminal domain"/>
    <property type="match status" value="1"/>
</dbReference>
<dbReference type="SUPFAM" id="SSF51735">
    <property type="entry name" value="NAD(P)-binding Rossmann-fold domains"/>
    <property type="match status" value="1"/>
</dbReference>
<dbReference type="PROSITE" id="PS00766">
    <property type="entry name" value="THF_DHG_CYH_1"/>
    <property type="match status" value="1"/>
</dbReference>
<dbReference type="PROSITE" id="PS00767">
    <property type="entry name" value="THF_DHG_CYH_2"/>
    <property type="match status" value="1"/>
</dbReference>
<protein>
    <recommendedName>
        <fullName evidence="1">Bifunctional protein FolD</fullName>
    </recommendedName>
    <domain>
        <recommendedName>
            <fullName evidence="1">Methylenetetrahydrofolate dehydrogenase</fullName>
            <ecNumber evidence="1">1.5.1.5</ecNumber>
        </recommendedName>
    </domain>
    <domain>
        <recommendedName>
            <fullName evidence="1">Methenyltetrahydrofolate cyclohydrolase</fullName>
            <ecNumber evidence="1">3.5.4.9</ecNumber>
        </recommendedName>
    </domain>
</protein>
<name>FOLD_ECOK1</name>
<gene>
    <name evidence="1" type="primary">folD</name>
    <name type="ordered locus">Ecok1_04900</name>
    <name type="ORF">APECO1_1486</name>
</gene>
<organism>
    <name type="scientific">Escherichia coli O1:K1 / APEC</name>
    <dbReference type="NCBI Taxonomy" id="405955"/>
    <lineage>
        <taxon>Bacteria</taxon>
        <taxon>Pseudomonadati</taxon>
        <taxon>Pseudomonadota</taxon>
        <taxon>Gammaproteobacteria</taxon>
        <taxon>Enterobacterales</taxon>
        <taxon>Enterobacteriaceae</taxon>
        <taxon>Escherichia</taxon>
    </lineage>
</organism>
<feature type="chain" id="PRO_0000305814" description="Bifunctional protein FolD">
    <location>
        <begin position="1"/>
        <end position="288"/>
    </location>
</feature>
<feature type="binding site" evidence="1">
    <location>
        <begin position="166"/>
        <end position="168"/>
    </location>
    <ligand>
        <name>NADP(+)</name>
        <dbReference type="ChEBI" id="CHEBI:58349"/>
    </ligand>
</feature>
<feature type="binding site" evidence="1">
    <location>
        <position position="232"/>
    </location>
    <ligand>
        <name>NADP(+)</name>
        <dbReference type="ChEBI" id="CHEBI:58349"/>
    </ligand>
</feature>
<comment type="function">
    <text evidence="1">Catalyzes the oxidation of 5,10-methylenetetrahydrofolate to 5,10-methenyltetrahydrofolate and then the hydrolysis of 5,10-methenyltetrahydrofolate to 10-formyltetrahydrofolate.</text>
</comment>
<comment type="catalytic activity">
    <reaction evidence="1">
        <text>(6R)-5,10-methylene-5,6,7,8-tetrahydrofolate + NADP(+) = (6R)-5,10-methenyltetrahydrofolate + NADPH</text>
        <dbReference type="Rhea" id="RHEA:22812"/>
        <dbReference type="ChEBI" id="CHEBI:15636"/>
        <dbReference type="ChEBI" id="CHEBI:57455"/>
        <dbReference type="ChEBI" id="CHEBI:57783"/>
        <dbReference type="ChEBI" id="CHEBI:58349"/>
        <dbReference type="EC" id="1.5.1.5"/>
    </reaction>
</comment>
<comment type="catalytic activity">
    <reaction evidence="1">
        <text>(6R)-5,10-methenyltetrahydrofolate + H2O = (6R)-10-formyltetrahydrofolate + H(+)</text>
        <dbReference type="Rhea" id="RHEA:23700"/>
        <dbReference type="ChEBI" id="CHEBI:15377"/>
        <dbReference type="ChEBI" id="CHEBI:15378"/>
        <dbReference type="ChEBI" id="CHEBI:57455"/>
        <dbReference type="ChEBI" id="CHEBI:195366"/>
        <dbReference type="EC" id="3.5.4.9"/>
    </reaction>
</comment>
<comment type="pathway">
    <text evidence="1">One-carbon metabolism; tetrahydrofolate interconversion.</text>
</comment>
<comment type="subunit">
    <text evidence="1">Homodimer.</text>
</comment>
<comment type="similarity">
    <text evidence="1">Belongs to the tetrahydrofolate dehydrogenase/cyclohydrolase family.</text>
</comment>
<evidence type="ECO:0000255" key="1">
    <source>
        <dbReference type="HAMAP-Rule" id="MF_01576"/>
    </source>
</evidence>
<proteinExistence type="inferred from homology"/>
<keyword id="KW-0028">Amino-acid biosynthesis</keyword>
<keyword id="KW-0368">Histidine biosynthesis</keyword>
<keyword id="KW-0378">Hydrolase</keyword>
<keyword id="KW-0486">Methionine biosynthesis</keyword>
<keyword id="KW-0511">Multifunctional enzyme</keyword>
<keyword id="KW-0521">NADP</keyword>
<keyword id="KW-0554">One-carbon metabolism</keyword>
<keyword id="KW-0560">Oxidoreductase</keyword>
<keyword id="KW-0658">Purine biosynthesis</keyword>
<keyword id="KW-1185">Reference proteome</keyword>
<reference key="1">
    <citation type="journal article" date="2007" name="J. Bacteriol.">
        <title>The genome sequence of avian pathogenic Escherichia coli strain O1:K1:H7 shares strong similarities with human extraintestinal pathogenic E. coli genomes.</title>
        <authorList>
            <person name="Johnson T.J."/>
            <person name="Kariyawasam S."/>
            <person name="Wannemuehler Y."/>
            <person name="Mangiamele P."/>
            <person name="Johnson S.J."/>
            <person name="Doetkott C."/>
            <person name="Skyberg J.A."/>
            <person name="Lynne A.M."/>
            <person name="Johnson J.R."/>
            <person name="Nolan L.K."/>
        </authorList>
    </citation>
    <scope>NUCLEOTIDE SEQUENCE [LARGE SCALE GENOMIC DNA]</scope>
</reference>
<sequence>MAAKIIDGKTIAQQVRSEVAQKVQARIAAGLRAPGLAVVLVGSNPASQIYVASKRKACEEVGFVSRSYDLPETTSEAELLELIDALNADNTIDGILVQLPLPAGIDNVKVLERIHPDKDVDGFHPYNVGRLCQRAPRLRPCTPRGIVTLLERYNIDTFGLNAVVIGASNIVGRPMSMELLLAGCTTTVTHRFTKNLRHHVENADLLIVAVGKPGFIPGDWIKEGAIVIDVGINRLENGKVVGDVVFEDAAKRASYITPVPGGVGPMTVATLIENTLQACVEYHDPQGE</sequence>
<accession>A1A8J4</accession>